<proteinExistence type="inferred from homology"/>
<dbReference type="EMBL" id="AE010299">
    <property type="protein sequence ID" value="AAM06034.1"/>
    <property type="molecule type" value="Genomic_DNA"/>
</dbReference>
<dbReference type="SMR" id="Q8TMK1"/>
<dbReference type="EnsemblBacteria" id="AAM06034">
    <property type="protein sequence ID" value="AAM06034"/>
    <property type="gene ID" value="MA_2656"/>
</dbReference>
<dbReference type="KEGG" id="mac:MA_2656"/>
<dbReference type="HOGENOM" id="CLU_803175_0_0_2"/>
<dbReference type="InParanoid" id="Q8TMK1"/>
<dbReference type="PhylomeDB" id="Q8TMK1"/>
<dbReference type="Proteomes" id="UP000002487">
    <property type="component" value="Chromosome"/>
</dbReference>
<dbReference type="InterPro" id="IPR008887">
    <property type="entry name" value="UPF0228"/>
</dbReference>
<dbReference type="Pfam" id="PF05727">
    <property type="entry name" value="UPF0228"/>
    <property type="match status" value="2"/>
</dbReference>
<keyword id="KW-1185">Reference proteome</keyword>
<organism>
    <name type="scientific">Methanosarcina acetivorans (strain ATCC 35395 / DSM 2834 / JCM 12185 / C2A)</name>
    <dbReference type="NCBI Taxonomy" id="188937"/>
    <lineage>
        <taxon>Archaea</taxon>
        <taxon>Methanobacteriati</taxon>
        <taxon>Methanobacteriota</taxon>
        <taxon>Stenosarchaea group</taxon>
        <taxon>Methanomicrobia</taxon>
        <taxon>Methanosarcinales</taxon>
        <taxon>Methanosarcinaceae</taxon>
        <taxon>Methanosarcina</taxon>
    </lineage>
</organism>
<name>Y2656_METAC</name>
<protein>
    <recommendedName>
        <fullName>UPF0228 protein MA_2656</fullName>
    </recommendedName>
</protein>
<gene>
    <name type="ordered locus">MA_2656</name>
</gene>
<reference key="1">
    <citation type="journal article" date="2002" name="Genome Res.">
        <title>The genome of Methanosarcina acetivorans reveals extensive metabolic and physiological diversity.</title>
        <authorList>
            <person name="Galagan J.E."/>
            <person name="Nusbaum C."/>
            <person name="Roy A."/>
            <person name="Endrizzi M.G."/>
            <person name="Macdonald P."/>
            <person name="FitzHugh W."/>
            <person name="Calvo S."/>
            <person name="Engels R."/>
            <person name="Smirnov S."/>
            <person name="Atnoor D."/>
            <person name="Brown A."/>
            <person name="Allen N."/>
            <person name="Naylor J."/>
            <person name="Stange-Thomann N."/>
            <person name="DeArellano K."/>
            <person name="Johnson R."/>
            <person name="Linton L."/>
            <person name="McEwan P."/>
            <person name="McKernan K."/>
            <person name="Talamas J."/>
            <person name="Tirrell A."/>
            <person name="Ye W."/>
            <person name="Zimmer A."/>
            <person name="Barber R.D."/>
            <person name="Cann I."/>
            <person name="Graham D.E."/>
            <person name="Grahame D.A."/>
            <person name="Guss A.M."/>
            <person name="Hedderich R."/>
            <person name="Ingram-Smith C."/>
            <person name="Kuettner H.C."/>
            <person name="Krzycki J.A."/>
            <person name="Leigh J.A."/>
            <person name="Li W."/>
            <person name="Liu J."/>
            <person name="Mukhopadhyay B."/>
            <person name="Reeve J.N."/>
            <person name="Smith K."/>
            <person name="Springer T.A."/>
            <person name="Umayam L.A."/>
            <person name="White O."/>
            <person name="White R.H."/>
            <person name="de Macario E.C."/>
            <person name="Ferry J.G."/>
            <person name="Jarrell K.F."/>
            <person name="Jing H."/>
            <person name="Macario A.J.L."/>
            <person name="Paulsen I.T."/>
            <person name="Pritchett M."/>
            <person name="Sowers K.R."/>
            <person name="Swanson R.V."/>
            <person name="Zinder S.H."/>
            <person name="Lander E."/>
            <person name="Metcalf W.W."/>
            <person name="Birren B."/>
        </authorList>
    </citation>
    <scope>NUCLEOTIDE SEQUENCE [LARGE SCALE GENOMIC DNA]</scope>
    <source>
        <strain>ATCC 35395 / DSM 2834 / JCM 12185 / C2A</strain>
    </source>
</reference>
<comment type="similarity">
    <text evidence="1">Belongs to the UPF0228 family.</text>
</comment>
<accession>Q8TMK1</accession>
<sequence>MTGMSKFNKEITVFIFFLALVILWGLFANASADMKTPVDTKVPVDTKTPFQGKKVAGFFIEFEEGTTEPEVKDILENYNMTVNTIDYNSDIIPGRYYMILDRDRIMDIEELVDEVNLTIPIKKGSNYLVTVTEQAIEDKNFLAILEKNNLPVKKSVYCYIRLEDESENGSIPQKDAYQIANELEKNEKVLAASPDTRINHLLIEFEDGTTEQEVKSILEKYNTTMNTIEYDSNLQPERYYLVVDADKRMDVRNELGKDENWTDPIYHDIKKGNHYIITVTEQAIEDKNFLAMLEKNDLQVKNSVLCCITLGNESKNWIWESDERRIENELKMNEKVLTLLRCGST</sequence>
<evidence type="ECO:0000305" key="1"/>
<feature type="chain" id="PRO_0000220396" description="UPF0228 protein MA_2656">
    <location>
        <begin position="1"/>
        <end position="345"/>
    </location>
</feature>